<comment type="miscellaneous">
    <text evidence="1">Partially overlaps YLR040C.</text>
</comment>
<comment type="caution">
    <text evidence="2">Product of a dubious gene prediction unlikely to encode a functional protein. Because of that it is not part of the S.cerevisiae S288c complete/reference proteome set.</text>
</comment>
<dbReference type="EMBL" id="Z73212">
    <property type="protein sequence ID" value="CAA97569.1"/>
    <property type="molecule type" value="Genomic_DNA"/>
</dbReference>
<dbReference type="PIR" id="S64868">
    <property type="entry name" value="S64868"/>
</dbReference>
<dbReference type="IntAct" id="Q07989">
    <property type="interactions" value="1"/>
</dbReference>
<dbReference type="PaxDb" id="4932-YLR041W"/>
<dbReference type="EnsemblFungi" id="YLR041W_mRNA">
    <property type="protein sequence ID" value="YLR041W"/>
    <property type="gene ID" value="YLR041W"/>
</dbReference>
<dbReference type="AGR" id="SGD:S000004031"/>
<dbReference type="SGD" id="S000004031">
    <property type="gene designation" value="YLR041W"/>
</dbReference>
<dbReference type="HOGENOM" id="CLU_2225286_0_0_1"/>
<evidence type="ECO:0000305" key="1"/>
<evidence type="ECO:0000305" key="2">
    <source>
    </source>
</evidence>
<accession>Q07989</accession>
<proteinExistence type="uncertain"/>
<organism>
    <name type="scientific">Saccharomyces cerevisiae (strain ATCC 204508 / S288c)</name>
    <name type="common">Baker's yeast</name>
    <dbReference type="NCBI Taxonomy" id="559292"/>
    <lineage>
        <taxon>Eukaryota</taxon>
        <taxon>Fungi</taxon>
        <taxon>Dikarya</taxon>
        <taxon>Ascomycota</taxon>
        <taxon>Saccharomycotina</taxon>
        <taxon>Saccharomycetes</taxon>
        <taxon>Saccharomycetales</taxon>
        <taxon>Saccharomycetaceae</taxon>
        <taxon>Saccharomyces</taxon>
    </lineage>
</organism>
<protein>
    <recommendedName>
        <fullName>Putative uncharacterized protein YLR041W</fullName>
    </recommendedName>
</protein>
<sequence>MYEVYCGKAVSKSFKNSMKNAMSASAAADLASVSSLELDVKVLAAKLWLIRKLTRRIFLMREKEGANIIDTQYFQECCKWFVTGYRNHLIRNNTPEYDQVKQNNKE</sequence>
<feature type="chain" id="PRO_0000299608" description="Putative uncharacterized protein YLR041W">
    <location>
        <begin position="1"/>
        <end position="106"/>
    </location>
</feature>
<gene>
    <name type="ordered locus">YLR041W</name>
    <name type="ORF">L1925</name>
</gene>
<name>YL041_YEAST</name>
<reference key="1">
    <citation type="journal article" date="1997" name="Nature">
        <title>The nucleotide sequence of Saccharomyces cerevisiae chromosome XII.</title>
        <authorList>
            <person name="Johnston M."/>
            <person name="Hillier L.W."/>
            <person name="Riles L."/>
            <person name="Albermann K."/>
            <person name="Andre B."/>
            <person name="Ansorge W."/>
            <person name="Benes V."/>
            <person name="Brueckner M."/>
            <person name="Delius H."/>
            <person name="Dubois E."/>
            <person name="Duesterhoeft A."/>
            <person name="Entian K.-D."/>
            <person name="Floeth M."/>
            <person name="Goffeau A."/>
            <person name="Hebling U."/>
            <person name="Heumann K."/>
            <person name="Heuss-Neitzel D."/>
            <person name="Hilbert H."/>
            <person name="Hilger F."/>
            <person name="Kleine K."/>
            <person name="Koetter P."/>
            <person name="Louis E.J."/>
            <person name="Messenguy F."/>
            <person name="Mewes H.-W."/>
            <person name="Miosga T."/>
            <person name="Moestl D."/>
            <person name="Mueller-Auer S."/>
            <person name="Nentwich U."/>
            <person name="Obermaier B."/>
            <person name="Piravandi E."/>
            <person name="Pohl T.M."/>
            <person name="Portetelle D."/>
            <person name="Purnelle B."/>
            <person name="Rechmann S."/>
            <person name="Rieger M."/>
            <person name="Rinke M."/>
            <person name="Rose M."/>
            <person name="Scharfe M."/>
            <person name="Scherens B."/>
            <person name="Scholler P."/>
            <person name="Schwager C."/>
            <person name="Schwarz S."/>
            <person name="Underwood A.P."/>
            <person name="Urrestarazu L.A."/>
            <person name="Vandenbol M."/>
            <person name="Verhasselt P."/>
            <person name="Vierendeels F."/>
            <person name="Voet M."/>
            <person name="Volckaert G."/>
            <person name="Voss H."/>
            <person name="Wambutt R."/>
            <person name="Wedler E."/>
            <person name="Wedler H."/>
            <person name="Zimmermann F.K."/>
            <person name="Zollner A."/>
            <person name="Hani J."/>
            <person name="Hoheisel J.D."/>
        </authorList>
    </citation>
    <scope>NUCLEOTIDE SEQUENCE [LARGE SCALE GENOMIC DNA]</scope>
    <source>
        <strain>ATCC 204508 / S288c</strain>
    </source>
</reference>
<reference key="2">
    <citation type="journal article" date="2014" name="G3 (Bethesda)">
        <title>The reference genome sequence of Saccharomyces cerevisiae: Then and now.</title>
        <authorList>
            <person name="Engel S.R."/>
            <person name="Dietrich F.S."/>
            <person name="Fisk D.G."/>
            <person name="Binkley G."/>
            <person name="Balakrishnan R."/>
            <person name="Costanzo M.C."/>
            <person name="Dwight S.S."/>
            <person name="Hitz B.C."/>
            <person name="Karra K."/>
            <person name="Nash R.S."/>
            <person name="Weng S."/>
            <person name="Wong E.D."/>
            <person name="Lloyd P."/>
            <person name="Skrzypek M.S."/>
            <person name="Miyasato S.R."/>
            <person name="Simison M."/>
            <person name="Cherry J.M."/>
        </authorList>
    </citation>
    <scope>GENOME REANNOTATION</scope>
    <source>
        <strain>ATCC 204508 / S288c</strain>
    </source>
</reference>